<gene>
    <name evidence="1" type="primary">dxr</name>
    <name type="ordered locus">TDE_2342</name>
</gene>
<dbReference type="EC" id="1.1.1.267" evidence="1"/>
<dbReference type="EMBL" id="AE017226">
    <property type="protein sequence ID" value="AAS12860.1"/>
    <property type="molecule type" value="Genomic_DNA"/>
</dbReference>
<dbReference type="RefSeq" id="NP_972941.1">
    <property type="nucleotide sequence ID" value="NC_002967.9"/>
</dbReference>
<dbReference type="RefSeq" id="WP_002680260.1">
    <property type="nucleotide sequence ID" value="NC_002967.9"/>
</dbReference>
<dbReference type="SMR" id="Q73K78"/>
<dbReference type="STRING" id="243275.TDE_2342"/>
<dbReference type="PaxDb" id="243275-TDE_2342"/>
<dbReference type="GeneID" id="2739437"/>
<dbReference type="KEGG" id="tde:TDE_2342"/>
<dbReference type="PATRIC" id="fig|243275.7.peg.2210"/>
<dbReference type="eggNOG" id="COG0743">
    <property type="taxonomic scope" value="Bacteria"/>
</dbReference>
<dbReference type="HOGENOM" id="CLU_035714_4_0_12"/>
<dbReference type="OrthoDB" id="9806546at2"/>
<dbReference type="UniPathway" id="UPA00056">
    <property type="reaction ID" value="UER00092"/>
</dbReference>
<dbReference type="Proteomes" id="UP000008212">
    <property type="component" value="Chromosome"/>
</dbReference>
<dbReference type="GO" id="GO:0030604">
    <property type="term" value="F:1-deoxy-D-xylulose-5-phosphate reductoisomerase activity"/>
    <property type="evidence" value="ECO:0007669"/>
    <property type="project" value="UniProtKB-UniRule"/>
</dbReference>
<dbReference type="GO" id="GO:0030145">
    <property type="term" value="F:manganese ion binding"/>
    <property type="evidence" value="ECO:0007669"/>
    <property type="project" value="TreeGrafter"/>
</dbReference>
<dbReference type="GO" id="GO:0070402">
    <property type="term" value="F:NADPH binding"/>
    <property type="evidence" value="ECO:0007669"/>
    <property type="project" value="InterPro"/>
</dbReference>
<dbReference type="GO" id="GO:0051484">
    <property type="term" value="P:isopentenyl diphosphate biosynthetic process, methylerythritol 4-phosphate pathway involved in terpenoid biosynthetic process"/>
    <property type="evidence" value="ECO:0007669"/>
    <property type="project" value="TreeGrafter"/>
</dbReference>
<dbReference type="Gene3D" id="1.10.1740.10">
    <property type="match status" value="1"/>
</dbReference>
<dbReference type="Gene3D" id="3.40.50.720">
    <property type="entry name" value="NAD(P)-binding Rossmann-like Domain"/>
    <property type="match status" value="1"/>
</dbReference>
<dbReference type="HAMAP" id="MF_00183">
    <property type="entry name" value="DXP_reductoisom"/>
    <property type="match status" value="1"/>
</dbReference>
<dbReference type="InterPro" id="IPR003821">
    <property type="entry name" value="DXP_reductoisomerase"/>
</dbReference>
<dbReference type="InterPro" id="IPR013644">
    <property type="entry name" value="DXP_reductoisomerase_C"/>
</dbReference>
<dbReference type="InterPro" id="IPR013512">
    <property type="entry name" value="DXP_reductoisomerase_N"/>
</dbReference>
<dbReference type="InterPro" id="IPR026877">
    <property type="entry name" value="DXPR_C"/>
</dbReference>
<dbReference type="InterPro" id="IPR036169">
    <property type="entry name" value="DXPR_C_sf"/>
</dbReference>
<dbReference type="InterPro" id="IPR036291">
    <property type="entry name" value="NAD(P)-bd_dom_sf"/>
</dbReference>
<dbReference type="NCBIfam" id="TIGR00243">
    <property type="entry name" value="Dxr"/>
    <property type="match status" value="1"/>
</dbReference>
<dbReference type="PANTHER" id="PTHR30525">
    <property type="entry name" value="1-DEOXY-D-XYLULOSE 5-PHOSPHATE REDUCTOISOMERASE"/>
    <property type="match status" value="1"/>
</dbReference>
<dbReference type="PANTHER" id="PTHR30525:SF0">
    <property type="entry name" value="1-DEOXY-D-XYLULOSE 5-PHOSPHATE REDUCTOISOMERASE, CHLOROPLASTIC"/>
    <property type="match status" value="1"/>
</dbReference>
<dbReference type="Pfam" id="PF08436">
    <property type="entry name" value="DXP_redisom_C"/>
    <property type="match status" value="1"/>
</dbReference>
<dbReference type="Pfam" id="PF02670">
    <property type="entry name" value="DXP_reductoisom"/>
    <property type="match status" value="1"/>
</dbReference>
<dbReference type="Pfam" id="PF13288">
    <property type="entry name" value="DXPR_C"/>
    <property type="match status" value="1"/>
</dbReference>
<dbReference type="PIRSF" id="PIRSF006205">
    <property type="entry name" value="Dxp_reductismrs"/>
    <property type="match status" value="1"/>
</dbReference>
<dbReference type="SUPFAM" id="SSF69055">
    <property type="entry name" value="1-deoxy-D-xylulose-5-phosphate reductoisomerase, C-terminal domain"/>
    <property type="match status" value="1"/>
</dbReference>
<dbReference type="SUPFAM" id="SSF55347">
    <property type="entry name" value="Glyceraldehyde-3-phosphate dehydrogenase-like, C-terminal domain"/>
    <property type="match status" value="1"/>
</dbReference>
<dbReference type="SUPFAM" id="SSF51735">
    <property type="entry name" value="NAD(P)-binding Rossmann-fold domains"/>
    <property type="match status" value="1"/>
</dbReference>
<protein>
    <recommendedName>
        <fullName evidence="1">1-deoxy-D-xylulose 5-phosphate reductoisomerase</fullName>
        <shortName evidence="1">DXP reductoisomerase</shortName>
        <ecNumber evidence="1">1.1.1.267</ecNumber>
    </recommendedName>
    <alternativeName>
        <fullName evidence="1">1-deoxyxylulose-5-phosphate reductoisomerase</fullName>
    </alternativeName>
    <alternativeName>
        <fullName evidence="1">2-C-methyl-D-erythritol 4-phosphate synthase</fullName>
    </alternativeName>
</protein>
<proteinExistence type="inferred from homology"/>
<organism>
    <name type="scientific">Treponema denticola (strain ATCC 35405 / DSM 14222 / CIP 103919 / JCM 8153 / KCTC 15104)</name>
    <dbReference type="NCBI Taxonomy" id="243275"/>
    <lineage>
        <taxon>Bacteria</taxon>
        <taxon>Pseudomonadati</taxon>
        <taxon>Spirochaetota</taxon>
        <taxon>Spirochaetia</taxon>
        <taxon>Spirochaetales</taxon>
        <taxon>Treponemataceae</taxon>
        <taxon>Treponema</taxon>
    </lineage>
</organism>
<evidence type="ECO:0000255" key="1">
    <source>
        <dbReference type="HAMAP-Rule" id="MF_00183"/>
    </source>
</evidence>
<name>DXR_TREDE</name>
<accession>Q73K78</accession>
<reference key="1">
    <citation type="journal article" date="2004" name="Proc. Natl. Acad. Sci. U.S.A.">
        <title>Comparison of the genome of the oral pathogen Treponema denticola with other spirochete genomes.</title>
        <authorList>
            <person name="Seshadri R."/>
            <person name="Myers G.S.A."/>
            <person name="Tettelin H."/>
            <person name="Eisen J.A."/>
            <person name="Heidelberg J.F."/>
            <person name="Dodson R.J."/>
            <person name="Davidsen T.M."/>
            <person name="DeBoy R.T."/>
            <person name="Fouts D.E."/>
            <person name="Haft D.H."/>
            <person name="Selengut J."/>
            <person name="Ren Q."/>
            <person name="Brinkac L.M."/>
            <person name="Madupu R."/>
            <person name="Kolonay J.F."/>
            <person name="Durkin S.A."/>
            <person name="Daugherty S.C."/>
            <person name="Shetty J."/>
            <person name="Shvartsbeyn A."/>
            <person name="Gebregeorgis E."/>
            <person name="Geer K."/>
            <person name="Tsegaye G."/>
            <person name="Malek J.A."/>
            <person name="Ayodeji B."/>
            <person name="Shatsman S."/>
            <person name="McLeod M.P."/>
            <person name="Smajs D."/>
            <person name="Howell J.K."/>
            <person name="Pal S."/>
            <person name="Amin A."/>
            <person name="Vashisth P."/>
            <person name="McNeill T.Z."/>
            <person name="Xiang Q."/>
            <person name="Sodergren E."/>
            <person name="Baca E."/>
            <person name="Weinstock G.M."/>
            <person name="Norris S.J."/>
            <person name="Fraser C.M."/>
            <person name="Paulsen I.T."/>
        </authorList>
    </citation>
    <scope>NUCLEOTIDE SEQUENCE [LARGE SCALE GENOMIC DNA]</scope>
    <source>
        <strain>ATCC 35405 / DSM 14222 / CIP 103919 / JCM 8153 / KCTC 15104</strain>
    </source>
</reference>
<feature type="chain" id="PRO_0000163726" description="1-deoxy-D-xylulose 5-phosphate reductoisomerase">
    <location>
        <begin position="1"/>
        <end position="381"/>
    </location>
</feature>
<feature type="binding site" evidence="1">
    <location>
        <position position="13"/>
    </location>
    <ligand>
        <name>NADPH</name>
        <dbReference type="ChEBI" id="CHEBI:57783"/>
    </ligand>
</feature>
<feature type="binding site" evidence="1">
    <location>
        <position position="14"/>
    </location>
    <ligand>
        <name>NADPH</name>
        <dbReference type="ChEBI" id="CHEBI:57783"/>
    </ligand>
</feature>
<feature type="binding site" evidence="1">
    <location>
        <position position="15"/>
    </location>
    <ligand>
        <name>NADPH</name>
        <dbReference type="ChEBI" id="CHEBI:57783"/>
    </ligand>
</feature>
<feature type="binding site" evidence="1">
    <location>
        <position position="40"/>
    </location>
    <ligand>
        <name>NADPH</name>
        <dbReference type="ChEBI" id="CHEBI:57783"/>
    </ligand>
</feature>
<feature type="binding site" evidence="1">
    <location>
        <position position="114"/>
    </location>
    <ligand>
        <name>NADPH</name>
        <dbReference type="ChEBI" id="CHEBI:57783"/>
    </ligand>
</feature>
<feature type="binding site" evidence="1">
    <location>
        <position position="115"/>
    </location>
    <ligand>
        <name>1-deoxy-D-xylulose 5-phosphate</name>
        <dbReference type="ChEBI" id="CHEBI:57792"/>
    </ligand>
</feature>
<feature type="binding site" evidence="1">
    <location>
        <position position="116"/>
    </location>
    <ligand>
        <name>NADPH</name>
        <dbReference type="ChEBI" id="CHEBI:57783"/>
    </ligand>
</feature>
<feature type="binding site" evidence="1">
    <location>
        <position position="140"/>
    </location>
    <ligand>
        <name>Mn(2+)</name>
        <dbReference type="ChEBI" id="CHEBI:29035"/>
    </ligand>
</feature>
<feature type="binding site" evidence="1">
    <location>
        <position position="141"/>
    </location>
    <ligand>
        <name>1-deoxy-D-xylulose 5-phosphate</name>
        <dbReference type="ChEBI" id="CHEBI:57792"/>
    </ligand>
</feature>
<feature type="binding site" evidence="1">
    <location>
        <position position="142"/>
    </location>
    <ligand>
        <name>1-deoxy-D-xylulose 5-phosphate</name>
        <dbReference type="ChEBI" id="CHEBI:57792"/>
    </ligand>
</feature>
<feature type="binding site" evidence="1">
    <location>
        <position position="142"/>
    </location>
    <ligand>
        <name>Mn(2+)</name>
        <dbReference type="ChEBI" id="CHEBI:29035"/>
    </ligand>
</feature>
<feature type="binding site" evidence="1">
    <location>
        <position position="166"/>
    </location>
    <ligand>
        <name>1-deoxy-D-xylulose 5-phosphate</name>
        <dbReference type="ChEBI" id="CHEBI:57792"/>
    </ligand>
</feature>
<feature type="binding site" evidence="1">
    <location>
        <position position="189"/>
    </location>
    <ligand>
        <name>1-deoxy-D-xylulose 5-phosphate</name>
        <dbReference type="ChEBI" id="CHEBI:57792"/>
    </ligand>
</feature>
<feature type="binding site" evidence="1">
    <location>
        <position position="195"/>
    </location>
    <ligand>
        <name>NADPH</name>
        <dbReference type="ChEBI" id="CHEBI:57783"/>
    </ligand>
</feature>
<feature type="binding site" evidence="1">
    <location>
        <position position="202"/>
    </location>
    <ligand>
        <name>1-deoxy-D-xylulose 5-phosphate</name>
        <dbReference type="ChEBI" id="CHEBI:57792"/>
    </ligand>
</feature>
<feature type="binding site" evidence="1">
    <location>
        <position position="207"/>
    </location>
    <ligand>
        <name>1-deoxy-D-xylulose 5-phosphate</name>
        <dbReference type="ChEBI" id="CHEBI:57792"/>
    </ligand>
</feature>
<feature type="binding site" evidence="1">
    <location>
        <position position="208"/>
    </location>
    <ligand>
        <name>1-deoxy-D-xylulose 5-phosphate</name>
        <dbReference type="ChEBI" id="CHEBI:57792"/>
    </ligand>
</feature>
<feature type="binding site" evidence="1">
    <location>
        <position position="211"/>
    </location>
    <ligand>
        <name>1-deoxy-D-xylulose 5-phosphate</name>
        <dbReference type="ChEBI" id="CHEBI:57792"/>
    </ligand>
</feature>
<feature type="binding site" evidence="1">
    <location>
        <position position="211"/>
    </location>
    <ligand>
        <name>Mn(2+)</name>
        <dbReference type="ChEBI" id="CHEBI:29035"/>
    </ligand>
</feature>
<keyword id="KW-0414">Isoprene biosynthesis</keyword>
<keyword id="KW-0464">Manganese</keyword>
<keyword id="KW-0479">Metal-binding</keyword>
<keyword id="KW-0521">NADP</keyword>
<keyword id="KW-0560">Oxidoreductase</keyword>
<keyword id="KW-1185">Reference proteome</keyword>
<sequence>MGRKRVVVLGAGGSIGKNSLEIIRRFPDRFELAGFSVHSNSGFAKTLLAEFTDAQFVSTKKKNSNLKHEIDEEAVRRLIEKSKADIVINGIAGSAGLKASVEVIKSGLDLALANKETIVEAGELIFQDAEKSGSTIIPVDSEHAAIFQLINAHKKGNIEKIIITASGGPFLNTPREKLSTIKLEDALKHPTWKMGGKISIDSASLANKALEVIEAVKLFSFPPEKIEVTVHPQSIIHSMVQCKNGEIFAQASPPDMKNPILNALSFPKMPESFLKPLDFSQIIKLEFMPPRTDDFPMLALGFEAAGKGGAYPIAFNVANEEAVDAFIKGKIGFTDLADITQEVLNSDWTMKPSSYEEVYDYENRARAIALARILDRVNGLQ</sequence>
<comment type="function">
    <text evidence="1">Catalyzes the NADPH-dependent rearrangement and reduction of 1-deoxy-D-xylulose-5-phosphate (DXP) to 2-C-methyl-D-erythritol 4-phosphate (MEP).</text>
</comment>
<comment type="catalytic activity">
    <reaction evidence="1">
        <text>2-C-methyl-D-erythritol 4-phosphate + NADP(+) = 1-deoxy-D-xylulose 5-phosphate + NADPH + H(+)</text>
        <dbReference type="Rhea" id="RHEA:13717"/>
        <dbReference type="ChEBI" id="CHEBI:15378"/>
        <dbReference type="ChEBI" id="CHEBI:57783"/>
        <dbReference type="ChEBI" id="CHEBI:57792"/>
        <dbReference type="ChEBI" id="CHEBI:58262"/>
        <dbReference type="ChEBI" id="CHEBI:58349"/>
        <dbReference type="EC" id="1.1.1.267"/>
    </reaction>
    <physiologicalReaction direction="right-to-left" evidence="1">
        <dbReference type="Rhea" id="RHEA:13719"/>
    </physiologicalReaction>
</comment>
<comment type="cofactor">
    <cofactor evidence="1">
        <name>Mg(2+)</name>
        <dbReference type="ChEBI" id="CHEBI:18420"/>
    </cofactor>
    <cofactor evidence="1">
        <name>Mn(2+)</name>
        <dbReference type="ChEBI" id="CHEBI:29035"/>
    </cofactor>
</comment>
<comment type="pathway">
    <text evidence="1">Isoprenoid biosynthesis; isopentenyl diphosphate biosynthesis via DXP pathway; isopentenyl diphosphate from 1-deoxy-D-xylulose 5-phosphate: step 1/6.</text>
</comment>
<comment type="similarity">
    <text evidence="1">Belongs to the DXR family.</text>
</comment>